<evidence type="ECO:0000255" key="1">
    <source>
        <dbReference type="HAMAP-Rule" id="MF_00099"/>
    </source>
</evidence>
<evidence type="ECO:0000256" key="2">
    <source>
        <dbReference type="SAM" id="MobiDB-lite"/>
    </source>
</evidence>
<sequence length="372" mass="40348">MEDIRVLIVDDSALMRNLIGKIVDATPGLKIADKAMNGRFALQKLERVAPDVIVLDLEMPEMNGIEFLRELKKQNIKIPVVILSSIAKEGAKVTMDCLELGACDFITKPSGSESANLTTVSETLSKMLLAYGRRHQIETGTRSTDTTNSFSEPFKSTIPKPMTAAEPQKEEKPTPQREHGNIQIIAIGISTGGPNALRQVFASIDKDLPQPIVVVQHMPPGFTKEFALSLDKICPLEVKEAEDGDLIKPGRILIAPGGKHLVVEKRSLAAVAKVIDTEPQSGHKPSVDVLFGSVAKEYQNHALGIIMTGMGKDGAENITKLYTEGSRTIGQDEGSSVVYGMPRVAWEMGGVMEQVSLDNMAAAINRYGKEFA</sequence>
<dbReference type="EC" id="3.1.1.61" evidence="1"/>
<dbReference type="EC" id="3.5.1.44" evidence="1"/>
<dbReference type="EMBL" id="AE017226">
    <property type="protein sequence ID" value="AAS11143.1"/>
    <property type="molecule type" value="Genomic_DNA"/>
</dbReference>
<dbReference type="RefSeq" id="NP_971262.1">
    <property type="nucleotide sequence ID" value="NC_002967.9"/>
</dbReference>
<dbReference type="RefSeq" id="WP_002677016.1">
    <property type="nucleotide sequence ID" value="NC_002967.9"/>
</dbReference>
<dbReference type="SMR" id="P62646"/>
<dbReference type="STRING" id="243275.TDE_0648"/>
<dbReference type="PaxDb" id="243275-TDE_0648"/>
<dbReference type="GeneID" id="2740479"/>
<dbReference type="KEGG" id="tde:TDE_0648"/>
<dbReference type="PATRIC" id="fig|243275.7.peg.627"/>
<dbReference type="eggNOG" id="COG2201">
    <property type="taxonomic scope" value="Bacteria"/>
</dbReference>
<dbReference type="HOGENOM" id="CLU_000445_51_0_12"/>
<dbReference type="OrthoDB" id="9793421at2"/>
<dbReference type="Proteomes" id="UP000008212">
    <property type="component" value="Chromosome"/>
</dbReference>
<dbReference type="GO" id="GO:0005737">
    <property type="term" value="C:cytoplasm"/>
    <property type="evidence" value="ECO:0007669"/>
    <property type="project" value="UniProtKB-SubCell"/>
</dbReference>
<dbReference type="GO" id="GO:0000156">
    <property type="term" value="F:phosphorelay response regulator activity"/>
    <property type="evidence" value="ECO:0007669"/>
    <property type="project" value="InterPro"/>
</dbReference>
<dbReference type="GO" id="GO:0008984">
    <property type="term" value="F:protein-glutamate methylesterase activity"/>
    <property type="evidence" value="ECO:0007669"/>
    <property type="project" value="UniProtKB-UniRule"/>
</dbReference>
<dbReference type="GO" id="GO:0050568">
    <property type="term" value="F:protein-glutamine glutaminase activity"/>
    <property type="evidence" value="ECO:0007669"/>
    <property type="project" value="UniProtKB-UniRule"/>
</dbReference>
<dbReference type="GO" id="GO:0006935">
    <property type="term" value="P:chemotaxis"/>
    <property type="evidence" value="ECO:0007669"/>
    <property type="project" value="UniProtKB-UniRule"/>
</dbReference>
<dbReference type="CDD" id="cd16432">
    <property type="entry name" value="CheB_Rec"/>
    <property type="match status" value="1"/>
</dbReference>
<dbReference type="CDD" id="cd17541">
    <property type="entry name" value="REC_CheB-like"/>
    <property type="match status" value="1"/>
</dbReference>
<dbReference type="Gene3D" id="3.40.50.2300">
    <property type="match status" value="1"/>
</dbReference>
<dbReference type="Gene3D" id="3.40.50.180">
    <property type="entry name" value="Methylesterase CheB, C-terminal domain"/>
    <property type="match status" value="1"/>
</dbReference>
<dbReference type="HAMAP" id="MF_00099">
    <property type="entry name" value="CheB_chemtxs"/>
    <property type="match status" value="1"/>
</dbReference>
<dbReference type="InterPro" id="IPR008248">
    <property type="entry name" value="CheB-like"/>
</dbReference>
<dbReference type="InterPro" id="IPR035909">
    <property type="entry name" value="CheB_C"/>
</dbReference>
<dbReference type="InterPro" id="IPR011006">
    <property type="entry name" value="CheY-like_superfamily"/>
</dbReference>
<dbReference type="InterPro" id="IPR000673">
    <property type="entry name" value="Sig_transdc_resp-reg_Me-estase"/>
</dbReference>
<dbReference type="InterPro" id="IPR001789">
    <property type="entry name" value="Sig_transdc_resp-reg_receiver"/>
</dbReference>
<dbReference type="NCBIfam" id="NF001965">
    <property type="entry name" value="PRK00742.1"/>
    <property type="match status" value="1"/>
</dbReference>
<dbReference type="PANTHER" id="PTHR42872">
    <property type="entry name" value="PROTEIN-GLUTAMATE METHYLESTERASE/PROTEIN-GLUTAMINE GLUTAMINASE"/>
    <property type="match status" value="1"/>
</dbReference>
<dbReference type="PANTHER" id="PTHR42872:SF3">
    <property type="entry name" value="PROTEIN-GLUTAMATE METHYLESTERASE_PROTEIN-GLUTAMINE GLUTAMINASE 1"/>
    <property type="match status" value="1"/>
</dbReference>
<dbReference type="Pfam" id="PF01339">
    <property type="entry name" value="CheB_methylest"/>
    <property type="match status" value="1"/>
</dbReference>
<dbReference type="Pfam" id="PF00072">
    <property type="entry name" value="Response_reg"/>
    <property type="match status" value="1"/>
</dbReference>
<dbReference type="PIRSF" id="PIRSF000876">
    <property type="entry name" value="RR_chemtxs_CheB"/>
    <property type="match status" value="1"/>
</dbReference>
<dbReference type="SMART" id="SM00448">
    <property type="entry name" value="REC"/>
    <property type="match status" value="1"/>
</dbReference>
<dbReference type="SUPFAM" id="SSF52172">
    <property type="entry name" value="CheY-like"/>
    <property type="match status" value="1"/>
</dbReference>
<dbReference type="SUPFAM" id="SSF52738">
    <property type="entry name" value="Methylesterase CheB, C-terminal domain"/>
    <property type="match status" value="1"/>
</dbReference>
<dbReference type="PROSITE" id="PS50122">
    <property type="entry name" value="CHEB"/>
    <property type="match status" value="1"/>
</dbReference>
<dbReference type="PROSITE" id="PS50110">
    <property type="entry name" value="RESPONSE_REGULATORY"/>
    <property type="match status" value="1"/>
</dbReference>
<proteinExistence type="inferred from homology"/>
<accession>P62646</accession>
<accession>Q73PZ6</accession>
<keyword id="KW-0145">Chemotaxis</keyword>
<keyword id="KW-0963">Cytoplasm</keyword>
<keyword id="KW-0378">Hydrolase</keyword>
<keyword id="KW-0597">Phosphoprotein</keyword>
<keyword id="KW-1185">Reference proteome</keyword>
<name>CHEB_TREDE</name>
<feature type="chain" id="PRO_0000158034" description="Protein-glutamate methylesterase/protein-glutamine glutaminase">
    <location>
        <begin position="1"/>
        <end position="372"/>
    </location>
</feature>
<feature type="domain" description="Response regulatory" evidence="1">
    <location>
        <begin position="5"/>
        <end position="123"/>
    </location>
</feature>
<feature type="domain" description="CheB-type methylesterase" evidence="1">
    <location>
        <begin position="178"/>
        <end position="364"/>
    </location>
</feature>
<feature type="region of interest" description="Disordered" evidence="2">
    <location>
        <begin position="140"/>
        <end position="177"/>
    </location>
</feature>
<feature type="compositionally biased region" description="Polar residues" evidence="2">
    <location>
        <begin position="140"/>
        <end position="151"/>
    </location>
</feature>
<feature type="compositionally biased region" description="Basic and acidic residues" evidence="2">
    <location>
        <begin position="167"/>
        <end position="177"/>
    </location>
</feature>
<feature type="active site" evidence="1">
    <location>
        <position position="190"/>
    </location>
</feature>
<feature type="active site" evidence="1">
    <location>
        <position position="217"/>
    </location>
</feature>
<feature type="active site" evidence="1">
    <location>
        <position position="313"/>
    </location>
</feature>
<feature type="modified residue" description="4-aspartylphosphate" evidence="1">
    <location>
        <position position="56"/>
    </location>
</feature>
<gene>
    <name evidence="1" type="primary">cheB</name>
    <name type="ordered locus">TDE_0648</name>
</gene>
<organism>
    <name type="scientific">Treponema denticola (strain ATCC 35405 / DSM 14222 / CIP 103919 / JCM 8153 / KCTC 15104)</name>
    <dbReference type="NCBI Taxonomy" id="243275"/>
    <lineage>
        <taxon>Bacteria</taxon>
        <taxon>Pseudomonadati</taxon>
        <taxon>Spirochaetota</taxon>
        <taxon>Spirochaetia</taxon>
        <taxon>Spirochaetales</taxon>
        <taxon>Treponemataceae</taxon>
        <taxon>Treponema</taxon>
    </lineage>
</organism>
<comment type="function">
    <text evidence="1">Involved in chemotaxis. Part of a chemotaxis signal transduction system that modulates chemotaxis in response to various stimuli. Catalyzes the demethylation of specific methylglutamate residues introduced into the chemoreceptors (methyl-accepting chemotaxis proteins or MCP) by CheR. Also mediates the irreversible deamidation of specific glutamine residues to glutamic acid.</text>
</comment>
<comment type="catalytic activity">
    <reaction evidence="1">
        <text>[protein]-L-glutamate 5-O-methyl ester + H2O = L-glutamyl-[protein] + methanol + H(+)</text>
        <dbReference type="Rhea" id="RHEA:23236"/>
        <dbReference type="Rhea" id="RHEA-COMP:10208"/>
        <dbReference type="Rhea" id="RHEA-COMP:10311"/>
        <dbReference type="ChEBI" id="CHEBI:15377"/>
        <dbReference type="ChEBI" id="CHEBI:15378"/>
        <dbReference type="ChEBI" id="CHEBI:17790"/>
        <dbReference type="ChEBI" id="CHEBI:29973"/>
        <dbReference type="ChEBI" id="CHEBI:82795"/>
        <dbReference type="EC" id="3.1.1.61"/>
    </reaction>
</comment>
<comment type="catalytic activity">
    <reaction evidence="1">
        <text>L-glutaminyl-[protein] + H2O = L-glutamyl-[protein] + NH4(+)</text>
        <dbReference type="Rhea" id="RHEA:16441"/>
        <dbReference type="Rhea" id="RHEA-COMP:10207"/>
        <dbReference type="Rhea" id="RHEA-COMP:10208"/>
        <dbReference type="ChEBI" id="CHEBI:15377"/>
        <dbReference type="ChEBI" id="CHEBI:28938"/>
        <dbReference type="ChEBI" id="CHEBI:29973"/>
        <dbReference type="ChEBI" id="CHEBI:30011"/>
        <dbReference type="EC" id="3.5.1.44"/>
    </reaction>
</comment>
<comment type="subcellular location">
    <subcellularLocation>
        <location evidence="1">Cytoplasm</location>
    </subcellularLocation>
</comment>
<comment type="domain">
    <text evidence="1">Contains a C-terminal catalytic domain, and an N-terminal region which modulates catalytic activity.</text>
</comment>
<comment type="PTM">
    <text evidence="1">Phosphorylated by CheA. Phosphorylation of the N-terminal regulatory domain activates the methylesterase activity.</text>
</comment>
<comment type="similarity">
    <text evidence="1">Belongs to the CheB family.</text>
</comment>
<reference key="1">
    <citation type="journal article" date="2004" name="Proc. Natl. Acad. Sci. U.S.A.">
        <title>Comparison of the genome of the oral pathogen Treponema denticola with other spirochete genomes.</title>
        <authorList>
            <person name="Seshadri R."/>
            <person name="Myers G.S.A."/>
            <person name="Tettelin H."/>
            <person name="Eisen J.A."/>
            <person name="Heidelberg J.F."/>
            <person name="Dodson R.J."/>
            <person name="Davidsen T.M."/>
            <person name="DeBoy R.T."/>
            <person name="Fouts D.E."/>
            <person name="Haft D.H."/>
            <person name="Selengut J."/>
            <person name="Ren Q."/>
            <person name="Brinkac L.M."/>
            <person name="Madupu R."/>
            <person name="Kolonay J.F."/>
            <person name="Durkin S.A."/>
            <person name="Daugherty S.C."/>
            <person name="Shetty J."/>
            <person name="Shvartsbeyn A."/>
            <person name="Gebregeorgis E."/>
            <person name="Geer K."/>
            <person name="Tsegaye G."/>
            <person name="Malek J.A."/>
            <person name="Ayodeji B."/>
            <person name="Shatsman S."/>
            <person name="McLeod M.P."/>
            <person name="Smajs D."/>
            <person name="Howell J.K."/>
            <person name="Pal S."/>
            <person name="Amin A."/>
            <person name="Vashisth P."/>
            <person name="McNeill T.Z."/>
            <person name="Xiang Q."/>
            <person name="Sodergren E."/>
            <person name="Baca E."/>
            <person name="Weinstock G.M."/>
            <person name="Norris S.J."/>
            <person name="Fraser C.M."/>
            <person name="Paulsen I.T."/>
        </authorList>
    </citation>
    <scope>NUCLEOTIDE SEQUENCE [LARGE SCALE GENOMIC DNA]</scope>
    <source>
        <strain>ATCC 35405 / DSM 14222 / CIP 103919 / JCM 8153 / KCTC 15104</strain>
    </source>
</reference>
<protein>
    <recommendedName>
        <fullName evidence="1">Protein-glutamate methylesterase/protein-glutamine glutaminase</fullName>
        <ecNumber evidence="1">3.1.1.61</ecNumber>
        <ecNumber evidence="1">3.5.1.44</ecNumber>
    </recommendedName>
</protein>